<organism>
    <name type="scientific">Arabidopsis thaliana</name>
    <name type="common">Mouse-ear cress</name>
    <dbReference type="NCBI Taxonomy" id="3702"/>
    <lineage>
        <taxon>Eukaryota</taxon>
        <taxon>Viridiplantae</taxon>
        <taxon>Streptophyta</taxon>
        <taxon>Embryophyta</taxon>
        <taxon>Tracheophyta</taxon>
        <taxon>Spermatophyta</taxon>
        <taxon>Magnoliopsida</taxon>
        <taxon>eudicotyledons</taxon>
        <taxon>Gunneridae</taxon>
        <taxon>Pentapetalae</taxon>
        <taxon>rosids</taxon>
        <taxon>malvids</taxon>
        <taxon>Brassicales</taxon>
        <taxon>Brassicaceae</taxon>
        <taxon>Camelineae</taxon>
        <taxon>Arabidopsis</taxon>
    </lineage>
</organism>
<comment type="function">
    <text evidence="5 6 9">Probable component of a transcriptional corepressor complex that acts downstream of MAX2 to negatively regulate karrikins/strigolactone responses (PubMed:23893171, PubMed:26546447). Probable target of MAX2 during germination and seedling photomorphogenesis (PubMed:26546447). Acts probably specifically in the karrikin pathway (PubMed:26754282).</text>
</comment>
<comment type="subunit">
    <text evidence="5">Interacts probably with TPL/TPR in an EAR-motif dependent manner. Interacts with TPL, TPR1, TPR2 and TPR4.</text>
</comment>
<comment type="tissue specificity">
    <text evidence="4 5">Highly expressed in dry seeds. Expressed in seedlings, rosette leaves and senescing leaves. Detected in roots and axillary shoots (PubMed:23893171). Expressed in the primary rosette buds and expanding leaves of adult rosettes, the vasculature of the hypocotyls, cotyledons, and mature roots, in the midvein and petioles of young leaves, the young leaf periphery, stomata, and the root caps (PubMed:26546447).</text>
</comment>
<comment type="developmental stage">
    <text evidence="4">Peak of expression in seeds during maturation.</text>
</comment>
<comment type="induction">
    <text evidence="3 4">Up-regulated by karrikins treatments (PubMed:20351290). Under MAX2-dependent negative feedback regulation (PubMed:23893171).</text>
</comment>
<comment type="domain">
    <text evidence="5">Contains 1 EAR motif required for the interaction with TPR2.</text>
</comment>
<comment type="disruption phenotype">
    <text evidence="4 5 6">Low seed dormancy and short hypocotyls (PubMed:23893171). Suppresses max2 phenotypes associated with karrikin-KAI2-regulated growth (PubMed:26546447). Smax1 and smxl2 double mutants have substantial reduction in hypocotyl elongation (PubMed:26754282).</text>
</comment>
<comment type="similarity">
    <text evidence="8">Belongs to the ClpA/ClpB family.</text>
</comment>
<gene>
    <name evidence="7" type="primary">SMAX1</name>
    <name evidence="11" type="ordered locus">At5g57710</name>
    <name evidence="12" type="ORF">MRI1.7</name>
</gene>
<evidence type="ECO:0000255" key="1">
    <source>
        <dbReference type="PROSITE-ProRule" id="PRU01251"/>
    </source>
</evidence>
<evidence type="ECO:0000256" key="2">
    <source>
        <dbReference type="SAM" id="MobiDB-lite"/>
    </source>
</evidence>
<evidence type="ECO:0000269" key="3">
    <source>
    </source>
</evidence>
<evidence type="ECO:0000269" key="4">
    <source>
    </source>
</evidence>
<evidence type="ECO:0000269" key="5">
    <source>
    </source>
</evidence>
<evidence type="ECO:0000269" key="6">
    <source>
    </source>
</evidence>
<evidence type="ECO:0000303" key="7">
    <source>
    </source>
</evidence>
<evidence type="ECO:0000305" key="8"/>
<evidence type="ECO:0000305" key="9">
    <source>
    </source>
</evidence>
<evidence type="ECO:0000305" key="10">
    <source>
    </source>
</evidence>
<evidence type="ECO:0000312" key="11">
    <source>
        <dbReference type="Araport" id="AT5G57710"/>
    </source>
</evidence>
<evidence type="ECO:0000312" key="12">
    <source>
        <dbReference type="EMBL" id="BAB09589.1"/>
    </source>
</evidence>
<keyword id="KW-0378">Hydrolase</keyword>
<keyword id="KW-1185">Reference proteome</keyword>
<keyword id="KW-0677">Repeat</keyword>
<keyword id="KW-0804">Transcription</keyword>
<keyword id="KW-0805">Transcription regulation</keyword>
<proteinExistence type="evidence at protein level"/>
<feature type="chain" id="PRO_0000435710" description="Protein SUPPRESSOR OF MAX2 1">
    <location>
        <begin position="1"/>
        <end position="990"/>
    </location>
</feature>
<feature type="domain" description="Clp R" evidence="1">
    <location>
        <begin position="8"/>
        <end position="167"/>
    </location>
</feature>
<feature type="region of interest" description="Repeat 1" evidence="1">
    <location>
        <begin position="12"/>
        <end position="83"/>
    </location>
</feature>
<feature type="region of interest" description="Repeat 2" evidence="1">
    <location>
        <begin position="96"/>
        <end position="167"/>
    </location>
</feature>
<feature type="region of interest" description="Disordered" evidence="2">
    <location>
        <begin position="818"/>
        <end position="855"/>
    </location>
</feature>
<feature type="short sequence motif" description="EAR" evidence="10">
    <location>
        <begin position="828"/>
        <end position="832"/>
    </location>
</feature>
<reference key="1">
    <citation type="journal article" date="1999" name="DNA Res.">
        <title>Structural analysis of Arabidopsis thaliana chromosome 5. IX. Sequence features of the regions of 1,011,550 bp covered by seventeen P1 and TAC clones.</title>
        <authorList>
            <person name="Kaneko T."/>
            <person name="Katoh T."/>
            <person name="Sato S."/>
            <person name="Nakamura Y."/>
            <person name="Asamizu E."/>
            <person name="Kotani H."/>
            <person name="Miyajima N."/>
            <person name="Tabata S."/>
        </authorList>
    </citation>
    <scope>NUCLEOTIDE SEQUENCE [LARGE SCALE GENOMIC DNA]</scope>
    <source>
        <strain>cv. Columbia</strain>
    </source>
</reference>
<reference key="2">
    <citation type="journal article" date="2017" name="Plant J.">
        <title>Araport11: a complete reannotation of the Arabidopsis thaliana reference genome.</title>
        <authorList>
            <person name="Cheng C.Y."/>
            <person name="Krishnakumar V."/>
            <person name="Chan A.P."/>
            <person name="Thibaud-Nissen F."/>
            <person name="Schobel S."/>
            <person name="Town C.D."/>
        </authorList>
    </citation>
    <scope>GENOME REANNOTATION</scope>
    <source>
        <strain>cv. Columbia</strain>
    </source>
</reference>
<reference key="3">
    <citation type="journal article" date="2010" name="Proc. Natl. Acad. Sci. U.S.A.">
        <title>Karrikins enhance light responses during germination and seedling development in Arabidopsis thaliana.</title>
        <authorList>
            <person name="Nelson D.C."/>
            <person name="Flematti G.R."/>
            <person name="Riseborough J.A."/>
            <person name="Ghisalberti E.L."/>
            <person name="Dixon K.W."/>
            <person name="Smith S.M."/>
        </authorList>
    </citation>
    <scope>INDUCTION BY KARRIKINS</scope>
</reference>
<reference key="4">
    <citation type="journal article" date="2013" name="Plant Physiol.">
        <title>SUPPRESSOR OF MORE AXILLARY GROWTH2 1 controls seed germination and seedling development in Arabidopsis.</title>
        <authorList>
            <person name="Stanga J.P."/>
            <person name="Smith S.M."/>
            <person name="Briggs W.R."/>
            <person name="Nelson D.C."/>
        </authorList>
    </citation>
    <scope>FUNCTION</scope>
    <scope>INDUCTION</scope>
    <scope>TISSUE SPECIFICITY</scope>
    <scope>DEVELOPMENTAL STAGE</scope>
    <scope>DISRUPTION PHENOTYPE</scope>
    <scope>GENE FAMILY</scope>
    <scope>NOMENCLATURE</scope>
</reference>
<reference key="5">
    <citation type="journal article" date="2014" name="Curr. Opin. Plant Biol.">
        <title>Strigolactone signalling: standing on the shoulders of DWARFs.</title>
        <authorList>
            <person name="Bennett T."/>
            <person name="Leyser O."/>
        </authorList>
    </citation>
    <scope>REVIEW</scope>
</reference>
<reference key="6">
    <citation type="journal article" date="2015" name="Plant Cell">
        <title>SMAX1-LIKE/D53 family members enable distinct MAX2-dependent responses to strigolactones and karrikins in Arabidopsis.</title>
        <authorList>
            <person name="Soundappan I."/>
            <person name="Bennett T."/>
            <person name="Morffy N."/>
            <person name="Liang Y."/>
            <person name="Stanga J.P."/>
            <person name="Abbas A."/>
            <person name="Leyser O."/>
            <person name="Nelson D.C."/>
        </authorList>
    </citation>
    <scope>FUNCTION</scope>
    <scope>DISRUPTION PHENOTYPE</scope>
    <scope>TISSUE SPECIFICITY</scope>
    <scope>INTERACTION WITH TPL; TPR1; TPR2 AND TPR4</scope>
    <scope>EAR MOTIF</scope>
</reference>
<reference key="7">
    <citation type="journal article" date="2016" name="Planta">
        <title>Functional redundancy in the control of seedling growth by the karrikin signaling pathway.</title>
        <authorList>
            <person name="Stanga J.P."/>
            <person name="Morffy N."/>
            <person name="Nelson D.C."/>
        </authorList>
    </citation>
    <scope>FUNCTION</scope>
    <scope>DISRUPTION PHENOTYPE</scope>
</reference>
<accession>Q9FHH2</accession>
<protein>
    <recommendedName>
        <fullName evidence="7">Protein SUPPRESSOR OF MAX2 1</fullName>
        <shortName evidence="7">AtSMXL1</shortName>
    </recommendedName>
</protein>
<dbReference type="EMBL" id="AB018118">
    <property type="protein sequence ID" value="BAB09589.1"/>
    <property type="molecule type" value="Genomic_DNA"/>
</dbReference>
<dbReference type="EMBL" id="CP002688">
    <property type="protein sequence ID" value="AED96941.1"/>
    <property type="molecule type" value="Genomic_DNA"/>
</dbReference>
<dbReference type="RefSeq" id="NP_200579.1">
    <property type="nucleotide sequence ID" value="NM_125154.4"/>
</dbReference>
<dbReference type="FunCoup" id="Q9FHH2">
    <property type="interactions" value="1036"/>
</dbReference>
<dbReference type="STRING" id="3702.Q9FHH2"/>
<dbReference type="GlyGen" id="Q9FHH2">
    <property type="glycosylation" value="1 site"/>
</dbReference>
<dbReference type="iPTMnet" id="Q9FHH2"/>
<dbReference type="PaxDb" id="3702-AT5G57710.1"/>
<dbReference type="ProteomicsDB" id="232565"/>
<dbReference type="EnsemblPlants" id="AT5G57710.1">
    <property type="protein sequence ID" value="AT5G57710.1"/>
    <property type="gene ID" value="AT5G57710"/>
</dbReference>
<dbReference type="GeneID" id="835878"/>
<dbReference type="Gramene" id="AT5G57710.1">
    <property type="protein sequence ID" value="AT5G57710.1"/>
    <property type="gene ID" value="AT5G57710"/>
</dbReference>
<dbReference type="KEGG" id="ath:AT5G57710"/>
<dbReference type="Araport" id="AT5G57710"/>
<dbReference type="TAIR" id="AT5G57710">
    <property type="gene designation" value="SMAX1"/>
</dbReference>
<dbReference type="eggNOG" id="KOG1051">
    <property type="taxonomic scope" value="Eukaryota"/>
</dbReference>
<dbReference type="HOGENOM" id="CLU_006575_0_2_1"/>
<dbReference type="InParanoid" id="Q9FHH2"/>
<dbReference type="OMA" id="KKWNDAC"/>
<dbReference type="PhylomeDB" id="Q9FHH2"/>
<dbReference type="PRO" id="PR:Q9FHH2"/>
<dbReference type="Proteomes" id="UP000006548">
    <property type="component" value="Chromosome 5"/>
</dbReference>
<dbReference type="ExpressionAtlas" id="Q9FHH2">
    <property type="expression patterns" value="baseline and differential"/>
</dbReference>
<dbReference type="GO" id="GO:0005524">
    <property type="term" value="F:ATP binding"/>
    <property type="evidence" value="ECO:0007669"/>
    <property type="project" value="InterPro"/>
</dbReference>
<dbReference type="GO" id="GO:0016887">
    <property type="term" value="F:ATP hydrolysis activity"/>
    <property type="evidence" value="ECO:0007669"/>
    <property type="project" value="InterPro"/>
</dbReference>
<dbReference type="GO" id="GO:0080167">
    <property type="term" value="P:response to karrikin"/>
    <property type="evidence" value="ECO:0000315"/>
    <property type="project" value="TAIR"/>
</dbReference>
<dbReference type="GO" id="GO:1902347">
    <property type="term" value="P:response to strigolactone"/>
    <property type="evidence" value="ECO:0000315"/>
    <property type="project" value="TAIR"/>
</dbReference>
<dbReference type="GO" id="GO:0009845">
    <property type="term" value="P:seed germination"/>
    <property type="evidence" value="ECO:0000315"/>
    <property type="project" value="TAIR"/>
</dbReference>
<dbReference type="GO" id="GO:0090351">
    <property type="term" value="P:seedling development"/>
    <property type="evidence" value="ECO:0000315"/>
    <property type="project" value="TAIR"/>
</dbReference>
<dbReference type="CDD" id="cd19499">
    <property type="entry name" value="RecA-like_ClpB_Hsp104-like"/>
    <property type="match status" value="1"/>
</dbReference>
<dbReference type="FunFam" id="3.40.50.300:FF:003505">
    <property type="entry name" value="Protein SUPPRESSOR OF MAX2 1"/>
    <property type="match status" value="1"/>
</dbReference>
<dbReference type="FunFam" id="1.10.1780.10:FF:000005">
    <property type="entry name" value="protein SUPPRESSOR OF MAX2 1"/>
    <property type="match status" value="1"/>
</dbReference>
<dbReference type="Gene3D" id="1.10.1780.10">
    <property type="entry name" value="Clp, N-terminal domain"/>
    <property type="match status" value="1"/>
</dbReference>
<dbReference type="Gene3D" id="3.40.50.300">
    <property type="entry name" value="P-loop containing nucleotide triphosphate hydrolases"/>
    <property type="match status" value="2"/>
</dbReference>
<dbReference type="InterPro" id="IPR003959">
    <property type="entry name" value="ATPase_AAA_core"/>
</dbReference>
<dbReference type="InterPro" id="IPR036628">
    <property type="entry name" value="Clp_N_dom_sf"/>
</dbReference>
<dbReference type="InterPro" id="IPR004176">
    <property type="entry name" value="Clp_R_dom"/>
</dbReference>
<dbReference type="InterPro" id="IPR027417">
    <property type="entry name" value="P-loop_NTPase"/>
</dbReference>
<dbReference type="InterPro" id="IPR051650">
    <property type="entry name" value="SL_signaling_regulator"/>
</dbReference>
<dbReference type="PANTHER" id="PTHR43572">
    <property type="entry name" value="CHAPERONE PROTEIN CLPD, CHLOROPLASTIC"/>
    <property type="match status" value="1"/>
</dbReference>
<dbReference type="PANTHER" id="PTHR43572:SF13">
    <property type="entry name" value="PROTEIN SUPPRESSOR OF MAX2 1"/>
    <property type="match status" value="1"/>
</dbReference>
<dbReference type="Pfam" id="PF07724">
    <property type="entry name" value="AAA_2"/>
    <property type="match status" value="1"/>
</dbReference>
<dbReference type="Pfam" id="PF23569">
    <property type="entry name" value="NBD_SMAX1"/>
    <property type="match status" value="1"/>
</dbReference>
<dbReference type="SUPFAM" id="SSF81923">
    <property type="entry name" value="Double Clp-N motif"/>
    <property type="match status" value="1"/>
</dbReference>
<dbReference type="SUPFAM" id="SSF52540">
    <property type="entry name" value="P-loop containing nucleoside triphosphate hydrolases"/>
    <property type="match status" value="1"/>
</dbReference>
<dbReference type="PROSITE" id="PS51903">
    <property type="entry name" value="CLP_R"/>
    <property type="match status" value="1"/>
</dbReference>
<sequence length="990" mass="108710">MRAGLSTIQQTLTPEAATVLNQSIAEAARRNHGQTTPLHVAATLLASPAGFLRRACIRSHPNSSHPLQCRALELCFSVALERLPTATTTPGNDPPISNALMAALKRAQAHQRRGCPEQQQQPLLAVKVELEQLIISILDDPSVSRVMREASFSSPAVKATIEQSLNNSVTPTPIPSVSSVGLNFRPGGGGPMTRNSYLNPRLQQNASSVQSGVSKNDDVERVMDILGRAKKKNPVLVGDSEPGRVIREILKKIEVGEVGNLAVKNSKVVSLEEISSDKALRIKELDGLLQTRLKNSDPIGGGGVILDLGDLKWLVEQPSSTQPPATVAVEIGRTAVVELRRLLEKFEGRLWFIGTATCETYLRCQVYHPSVETDWDLQAVSVAAKAPASGVFPRLANNLESFTPLKSFVPANRTLKCCPQCLQSYERELAEIDSVSSPEVKSEVAQPKQLPQWLLKAKPVDRLPQAKIEEVQKKWNDACVRLHPSFHNKNERIVPIPVPITLTTSPYSPNMLLRQPLQPKLQPNRELRERVHLKPMSPLVAEQAKKKSPPGSPVQTDLVLGRAEDSEKAGDVQVRDFLGCISSESVQNNNNISVLQKENLGNSLDIDLFKKLLKGMTEKVWWQNDAAAAVAATVSQCKLGNGKRRGVLSKGDVWLLFSGPDRVGKRKMVSALSSLVYGTNPIMIQLGSRQDAGDGNSSFRGKTALDKIAETVKRSPFSVILLEDIDEADMLVRGSIKQAMDRGRIRDSHGREISLGNVIFVMTASWHFAGTKTSFLDNEAKLRDLASESWRLRLCMREKFGKRRASWLCSDEERLTKPKKEHGSGLSFDLNQAADTDDGSHNTSDLTTDNDQDEQGFSGKLSLQCVPFAFHDMVSRVDDAVAFRAVDFAAVRRRITETLSERFETIIGESLSVEVEEEALQRILSGVWLGQTELEEWIEKAIVPVLSQLKARVSSSGTYGDCTVARLELDEDSGERNAGDLLPTTITLAV</sequence>
<name>SMAX1_ARATH</name>